<evidence type="ECO:0000255" key="1"/>
<evidence type="ECO:0000255" key="2">
    <source>
        <dbReference type="PROSITE-ProRule" id="PRU00297"/>
    </source>
</evidence>
<evidence type="ECO:0000255" key="3">
    <source>
        <dbReference type="PROSITE-ProRule" id="PRU10012"/>
    </source>
</evidence>
<evidence type="ECO:0000305" key="4"/>
<accession>Q9FX85</accession>
<accession>Q96513</accession>
<comment type="function">
    <text>Removal of H(2)O(2), oxidation of toxic reductants, biosynthesis and degradation of lignin, suberization, auxin catabolism, response to environmental stresses such as wounding, pathogen attack and oxidative stress. These functions might be dependent on each isozyme/isoform in each plant tissue.</text>
</comment>
<comment type="catalytic activity">
    <reaction>
        <text>2 a phenolic donor + H2O2 = 2 a phenolic radical donor + 2 H2O</text>
        <dbReference type="Rhea" id="RHEA:56136"/>
        <dbReference type="ChEBI" id="CHEBI:15377"/>
        <dbReference type="ChEBI" id="CHEBI:16240"/>
        <dbReference type="ChEBI" id="CHEBI:139520"/>
        <dbReference type="ChEBI" id="CHEBI:139521"/>
        <dbReference type="EC" id="1.11.1.7"/>
    </reaction>
</comment>
<comment type="cofactor">
    <cofactor evidence="2">
        <name>heme b</name>
        <dbReference type="ChEBI" id="CHEBI:60344"/>
    </cofactor>
    <text evidence="2">Binds 1 heme b (iron(II)-protoporphyrin IX) group per subunit.</text>
</comment>
<comment type="cofactor">
    <cofactor evidence="2">
        <name>Ca(2+)</name>
        <dbReference type="ChEBI" id="CHEBI:29108"/>
    </cofactor>
    <text evidence="2">Binds 2 calcium ions per subunit.</text>
</comment>
<comment type="subcellular location">
    <subcellularLocation>
        <location evidence="2">Secreted</location>
    </subcellularLocation>
</comment>
<comment type="tissue specificity">
    <text>Expressed in the whole plant, with the highest expression in roots.</text>
</comment>
<comment type="miscellaneous">
    <text>There are 73 peroxidase genes in A.thaliana.</text>
</comment>
<comment type="similarity">
    <text evidence="2">Belongs to the peroxidase family. Classical plant (class III) peroxidase subfamily.</text>
</comment>
<reference key="1">
    <citation type="submission" date="1996-06" db="EMBL/GenBank/DDBJ databases">
        <title>From expressed sequence tags to structure, function, evolution and expression of 28 ER-targeted Arabidopsis peroxidases.</title>
        <authorList>
            <person name="Welinder K.G."/>
            <person name="Jespersen H.M."/>
            <person name="Kjaersgaard I.V.H."/>
            <person name="Justesen A.F."/>
            <person name="Oestergaard L."/>
            <person name="Abelskov A.K."/>
            <person name="Hansen L.N."/>
            <person name="Rasmussen S.K."/>
        </authorList>
    </citation>
    <scope>NUCLEOTIDE SEQUENCE [MRNA]</scope>
    <source>
        <strain>cv. Columbia</strain>
    </source>
</reference>
<reference key="2">
    <citation type="journal article" date="2000" name="Nature">
        <title>Sequence and analysis of chromosome 1 of the plant Arabidopsis thaliana.</title>
        <authorList>
            <person name="Theologis A."/>
            <person name="Ecker J.R."/>
            <person name="Palm C.J."/>
            <person name="Federspiel N.A."/>
            <person name="Kaul S."/>
            <person name="White O."/>
            <person name="Alonso J."/>
            <person name="Altafi H."/>
            <person name="Araujo R."/>
            <person name="Bowman C.L."/>
            <person name="Brooks S.Y."/>
            <person name="Buehler E."/>
            <person name="Chan A."/>
            <person name="Chao Q."/>
            <person name="Chen H."/>
            <person name="Cheuk R.F."/>
            <person name="Chin C.W."/>
            <person name="Chung M.K."/>
            <person name="Conn L."/>
            <person name="Conway A.B."/>
            <person name="Conway A.R."/>
            <person name="Creasy T.H."/>
            <person name="Dewar K."/>
            <person name="Dunn P."/>
            <person name="Etgu P."/>
            <person name="Feldblyum T.V."/>
            <person name="Feng J.-D."/>
            <person name="Fong B."/>
            <person name="Fujii C.Y."/>
            <person name="Gill J.E."/>
            <person name="Goldsmith A.D."/>
            <person name="Haas B."/>
            <person name="Hansen N.F."/>
            <person name="Hughes B."/>
            <person name="Huizar L."/>
            <person name="Hunter J.L."/>
            <person name="Jenkins J."/>
            <person name="Johnson-Hopson C."/>
            <person name="Khan S."/>
            <person name="Khaykin E."/>
            <person name="Kim C.J."/>
            <person name="Koo H.L."/>
            <person name="Kremenetskaia I."/>
            <person name="Kurtz D.B."/>
            <person name="Kwan A."/>
            <person name="Lam B."/>
            <person name="Langin-Hooper S."/>
            <person name="Lee A."/>
            <person name="Lee J.M."/>
            <person name="Lenz C.A."/>
            <person name="Li J.H."/>
            <person name="Li Y.-P."/>
            <person name="Lin X."/>
            <person name="Liu S.X."/>
            <person name="Liu Z.A."/>
            <person name="Luros J.S."/>
            <person name="Maiti R."/>
            <person name="Marziali A."/>
            <person name="Militscher J."/>
            <person name="Miranda M."/>
            <person name="Nguyen M."/>
            <person name="Nierman W.C."/>
            <person name="Osborne B.I."/>
            <person name="Pai G."/>
            <person name="Peterson J."/>
            <person name="Pham P.K."/>
            <person name="Rizzo M."/>
            <person name="Rooney T."/>
            <person name="Rowley D."/>
            <person name="Sakano H."/>
            <person name="Salzberg S.L."/>
            <person name="Schwartz J.R."/>
            <person name="Shinn P."/>
            <person name="Southwick A.M."/>
            <person name="Sun H."/>
            <person name="Tallon L.J."/>
            <person name="Tambunga G."/>
            <person name="Toriumi M.J."/>
            <person name="Town C.D."/>
            <person name="Utterback T."/>
            <person name="Van Aken S."/>
            <person name="Vaysberg M."/>
            <person name="Vysotskaia V.S."/>
            <person name="Walker M."/>
            <person name="Wu D."/>
            <person name="Yu G."/>
            <person name="Fraser C.M."/>
            <person name="Venter J.C."/>
            <person name="Davis R.W."/>
        </authorList>
    </citation>
    <scope>NUCLEOTIDE SEQUENCE [LARGE SCALE GENOMIC DNA]</scope>
    <source>
        <strain>cv. Columbia</strain>
    </source>
</reference>
<reference key="3">
    <citation type="journal article" date="2017" name="Plant J.">
        <title>Araport11: a complete reannotation of the Arabidopsis thaliana reference genome.</title>
        <authorList>
            <person name="Cheng C.Y."/>
            <person name="Krishnakumar V."/>
            <person name="Chan A.P."/>
            <person name="Thibaud-Nissen F."/>
            <person name="Schobel S."/>
            <person name="Town C.D."/>
        </authorList>
    </citation>
    <scope>GENOME REANNOTATION</scope>
    <source>
        <strain>cv. Columbia</strain>
    </source>
</reference>
<reference key="4">
    <citation type="journal article" date="2002" name="Science">
        <title>Functional annotation of a full-length Arabidopsis cDNA collection.</title>
        <authorList>
            <person name="Seki M."/>
            <person name="Narusaka M."/>
            <person name="Kamiya A."/>
            <person name="Ishida J."/>
            <person name="Satou M."/>
            <person name="Sakurai T."/>
            <person name="Nakajima M."/>
            <person name="Enju A."/>
            <person name="Akiyama K."/>
            <person name="Oono Y."/>
            <person name="Muramatsu M."/>
            <person name="Hayashizaki Y."/>
            <person name="Kawai J."/>
            <person name="Carninci P."/>
            <person name="Itoh M."/>
            <person name="Ishii Y."/>
            <person name="Arakawa T."/>
            <person name="Shibata K."/>
            <person name="Shinagawa A."/>
            <person name="Shinozaki K."/>
        </authorList>
    </citation>
    <scope>NUCLEOTIDE SEQUENCE [LARGE SCALE MRNA]</scope>
    <source>
        <strain>cv. Columbia</strain>
    </source>
</reference>
<reference key="5">
    <citation type="journal article" date="2003" name="Science">
        <title>Empirical analysis of transcriptional activity in the Arabidopsis genome.</title>
        <authorList>
            <person name="Yamada K."/>
            <person name="Lim J."/>
            <person name="Dale J.M."/>
            <person name="Chen H."/>
            <person name="Shinn P."/>
            <person name="Palm C.J."/>
            <person name="Southwick A.M."/>
            <person name="Wu H.C."/>
            <person name="Kim C.J."/>
            <person name="Nguyen M."/>
            <person name="Pham P.K."/>
            <person name="Cheuk R.F."/>
            <person name="Karlin-Newmann G."/>
            <person name="Liu S.X."/>
            <person name="Lam B."/>
            <person name="Sakano H."/>
            <person name="Wu T."/>
            <person name="Yu G."/>
            <person name="Miranda M."/>
            <person name="Quach H.L."/>
            <person name="Tripp M."/>
            <person name="Chang C.H."/>
            <person name="Lee J.M."/>
            <person name="Toriumi M.J."/>
            <person name="Chan M.M."/>
            <person name="Tang C.C."/>
            <person name="Onodera C.S."/>
            <person name="Deng J.M."/>
            <person name="Akiyama K."/>
            <person name="Ansari Y."/>
            <person name="Arakawa T."/>
            <person name="Banh J."/>
            <person name="Banno F."/>
            <person name="Bowser L."/>
            <person name="Brooks S.Y."/>
            <person name="Carninci P."/>
            <person name="Chao Q."/>
            <person name="Choy N."/>
            <person name="Enju A."/>
            <person name="Goldsmith A.D."/>
            <person name="Gurjal M."/>
            <person name="Hansen N.F."/>
            <person name="Hayashizaki Y."/>
            <person name="Johnson-Hopson C."/>
            <person name="Hsuan V.W."/>
            <person name="Iida K."/>
            <person name="Karnes M."/>
            <person name="Khan S."/>
            <person name="Koesema E."/>
            <person name="Ishida J."/>
            <person name="Jiang P.X."/>
            <person name="Jones T."/>
            <person name="Kawai J."/>
            <person name="Kamiya A."/>
            <person name="Meyers C."/>
            <person name="Nakajima M."/>
            <person name="Narusaka M."/>
            <person name="Seki M."/>
            <person name="Sakurai T."/>
            <person name="Satou M."/>
            <person name="Tamse R."/>
            <person name="Vaysberg M."/>
            <person name="Wallender E.K."/>
            <person name="Wong C."/>
            <person name="Yamamura Y."/>
            <person name="Yuan S."/>
            <person name="Shinozaki K."/>
            <person name="Davis R.W."/>
            <person name="Theologis A."/>
            <person name="Ecker J.R."/>
        </authorList>
    </citation>
    <scope>NUCLEOTIDE SEQUENCE [LARGE SCALE MRNA]</scope>
    <source>
        <strain>cv. Columbia</strain>
    </source>
</reference>
<reference key="6">
    <citation type="journal article" date="1998" name="FEBS Lett.">
        <title>Computational analyses and annotations of the Arabidopsis peroxidase gene family.</title>
        <authorList>
            <person name="Oestergaard L."/>
            <person name="Pedersen A.G."/>
            <person name="Jespersen H.M."/>
            <person name="Brunak S."/>
            <person name="Welinder K.G."/>
        </authorList>
    </citation>
    <scope>CHARACTERIZATION</scope>
    <source>
        <strain>cv. Columbia</strain>
    </source>
</reference>
<reference key="7">
    <citation type="journal article" date="2002" name="Gene">
        <title>Analysis and expression of the class III peroxidase large gene family in Arabidopsis thaliana.</title>
        <authorList>
            <person name="Tognolli M."/>
            <person name="Penel C."/>
            <person name="Greppin H."/>
            <person name="Simon P."/>
        </authorList>
    </citation>
    <scope>GENE FAMILY ORGANIZATION</scope>
    <scope>NOMENCLATURE</scope>
    <source>
        <strain>cv. Columbia</strain>
    </source>
</reference>
<gene>
    <name type="primary">PER10</name>
    <name type="synonym">P10</name>
    <name type="ordered locus">At1g49570</name>
    <name type="ORF">F14J22.19</name>
</gene>
<organism>
    <name type="scientific">Arabidopsis thaliana</name>
    <name type="common">Mouse-ear cress</name>
    <dbReference type="NCBI Taxonomy" id="3702"/>
    <lineage>
        <taxon>Eukaryota</taxon>
        <taxon>Viridiplantae</taxon>
        <taxon>Streptophyta</taxon>
        <taxon>Embryophyta</taxon>
        <taxon>Tracheophyta</taxon>
        <taxon>Spermatophyta</taxon>
        <taxon>Magnoliopsida</taxon>
        <taxon>eudicotyledons</taxon>
        <taxon>Gunneridae</taxon>
        <taxon>Pentapetalae</taxon>
        <taxon>rosids</taxon>
        <taxon>malvids</taxon>
        <taxon>Brassicales</taxon>
        <taxon>Brassicaceae</taxon>
        <taxon>Camelineae</taxon>
        <taxon>Arabidopsis</taxon>
    </lineage>
</organism>
<name>PER10_ARATH</name>
<protein>
    <recommendedName>
        <fullName>Peroxidase 10</fullName>
        <shortName>Atperox P10</shortName>
        <ecNumber>1.11.1.7</ecNumber>
    </recommendedName>
    <alternativeName>
        <fullName>ATP5a</fullName>
    </alternativeName>
</protein>
<dbReference type="EC" id="1.11.1.7"/>
<dbReference type="EMBL" id="X98809">
    <property type="protein sequence ID" value="CAA67341.1"/>
    <property type="molecule type" value="mRNA"/>
</dbReference>
<dbReference type="EMBL" id="AC011807">
    <property type="protein sequence ID" value="AAG13043.1"/>
    <property type="molecule type" value="Genomic_DNA"/>
</dbReference>
<dbReference type="EMBL" id="CP002684">
    <property type="protein sequence ID" value="AEE32443.1"/>
    <property type="molecule type" value="Genomic_DNA"/>
</dbReference>
<dbReference type="EMBL" id="AK119130">
    <property type="protein sequence ID" value="BAC43700.1"/>
    <property type="molecule type" value="mRNA"/>
</dbReference>
<dbReference type="EMBL" id="BT006242">
    <property type="protein sequence ID" value="AAP12891.1"/>
    <property type="molecule type" value="mRNA"/>
</dbReference>
<dbReference type="PIR" id="C96532">
    <property type="entry name" value="C96532"/>
</dbReference>
<dbReference type="RefSeq" id="NP_175380.2">
    <property type="nucleotide sequence ID" value="NM_103845.3"/>
</dbReference>
<dbReference type="SMR" id="Q9FX85"/>
<dbReference type="FunCoup" id="Q9FX85">
    <property type="interactions" value="129"/>
</dbReference>
<dbReference type="STRING" id="3702.Q9FX85"/>
<dbReference type="PeroxiBase" id="86">
    <property type="entry name" value="AtPrx10"/>
</dbReference>
<dbReference type="GlyCosmos" id="Q9FX85">
    <property type="glycosylation" value="2 sites, No reported glycans"/>
</dbReference>
<dbReference type="GlyGen" id="Q9FX85">
    <property type="glycosylation" value="2 sites"/>
</dbReference>
<dbReference type="PaxDb" id="3702-AT1G49570.1"/>
<dbReference type="ProteomicsDB" id="236768"/>
<dbReference type="EnsemblPlants" id="AT1G49570.1">
    <property type="protein sequence ID" value="AT1G49570.1"/>
    <property type="gene ID" value="AT1G49570"/>
</dbReference>
<dbReference type="GeneID" id="841381"/>
<dbReference type="Gramene" id="AT1G49570.1">
    <property type="protein sequence ID" value="AT1G49570.1"/>
    <property type="gene ID" value="AT1G49570"/>
</dbReference>
<dbReference type="KEGG" id="ath:AT1G49570"/>
<dbReference type="Araport" id="AT1G49570"/>
<dbReference type="TAIR" id="AT1G49570"/>
<dbReference type="eggNOG" id="ENOG502QTKX">
    <property type="taxonomic scope" value="Eukaryota"/>
</dbReference>
<dbReference type="HOGENOM" id="CLU_010543_0_1_1"/>
<dbReference type="InParanoid" id="Q9FX85"/>
<dbReference type="OMA" id="LPRIIRW"/>
<dbReference type="OrthoDB" id="2113341at2759"/>
<dbReference type="PhylomeDB" id="Q9FX85"/>
<dbReference type="BioCyc" id="ARA:AT1G49570-MONOMER"/>
<dbReference type="PRO" id="PR:Q9FX85"/>
<dbReference type="Proteomes" id="UP000006548">
    <property type="component" value="Chromosome 1"/>
</dbReference>
<dbReference type="ExpressionAtlas" id="Q9FX85">
    <property type="expression patterns" value="baseline and differential"/>
</dbReference>
<dbReference type="GO" id="GO:0005576">
    <property type="term" value="C:extracellular region"/>
    <property type="evidence" value="ECO:0007669"/>
    <property type="project" value="UniProtKB-SubCell"/>
</dbReference>
<dbReference type="GO" id="GO:0020037">
    <property type="term" value="F:heme binding"/>
    <property type="evidence" value="ECO:0007669"/>
    <property type="project" value="InterPro"/>
</dbReference>
<dbReference type="GO" id="GO:0140825">
    <property type="term" value="F:lactoperoxidase activity"/>
    <property type="evidence" value="ECO:0007669"/>
    <property type="project" value="UniProtKB-EC"/>
</dbReference>
<dbReference type="GO" id="GO:0046872">
    <property type="term" value="F:metal ion binding"/>
    <property type="evidence" value="ECO:0007669"/>
    <property type="project" value="UniProtKB-KW"/>
</dbReference>
<dbReference type="GO" id="GO:0042744">
    <property type="term" value="P:hydrogen peroxide catabolic process"/>
    <property type="evidence" value="ECO:0007669"/>
    <property type="project" value="UniProtKB-KW"/>
</dbReference>
<dbReference type="GO" id="GO:0006979">
    <property type="term" value="P:response to oxidative stress"/>
    <property type="evidence" value="ECO:0007669"/>
    <property type="project" value="InterPro"/>
</dbReference>
<dbReference type="CDD" id="cd00693">
    <property type="entry name" value="secretory_peroxidase"/>
    <property type="match status" value="1"/>
</dbReference>
<dbReference type="FunFam" id="1.10.420.10:FF:000001">
    <property type="entry name" value="Peroxidase"/>
    <property type="match status" value="1"/>
</dbReference>
<dbReference type="FunFam" id="1.10.520.10:FF:000001">
    <property type="entry name" value="Peroxidase"/>
    <property type="match status" value="1"/>
</dbReference>
<dbReference type="Gene3D" id="1.10.520.10">
    <property type="match status" value="1"/>
</dbReference>
<dbReference type="Gene3D" id="1.10.420.10">
    <property type="entry name" value="Peroxidase, domain 2"/>
    <property type="match status" value="1"/>
</dbReference>
<dbReference type="InterPro" id="IPR002016">
    <property type="entry name" value="Haem_peroxidase"/>
</dbReference>
<dbReference type="InterPro" id="IPR010255">
    <property type="entry name" value="Haem_peroxidase_sf"/>
</dbReference>
<dbReference type="InterPro" id="IPR000823">
    <property type="entry name" value="Peroxidase_pln"/>
</dbReference>
<dbReference type="InterPro" id="IPR019794">
    <property type="entry name" value="Peroxidases_AS"/>
</dbReference>
<dbReference type="InterPro" id="IPR019793">
    <property type="entry name" value="Peroxidases_heam-ligand_BS"/>
</dbReference>
<dbReference type="InterPro" id="IPR033905">
    <property type="entry name" value="Secretory_peroxidase"/>
</dbReference>
<dbReference type="PANTHER" id="PTHR31388:SF34">
    <property type="entry name" value="PEROXIDASE 10"/>
    <property type="match status" value="1"/>
</dbReference>
<dbReference type="PANTHER" id="PTHR31388">
    <property type="entry name" value="PEROXIDASE 72-RELATED"/>
    <property type="match status" value="1"/>
</dbReference>
<dbReference type="Pfam" id="PF00141">
    <property type="entry name" value="peroxidase"/>
    <property type="match status" value="1"/>
</dbReference>
<dbReference type="PRINTS" id="PR00458">
    <property type="entry name" value="PEROXIDASE"/>
</dbReference>
<dbReference type="PRINTS" id="PR00461">
    <property type="entry name" value="PLPEROXIDASE"/>
</dbReference>
<dbReference type="SUPFAM" id="SSF48113">
    <property type="entry name" value="Heme-dependent peroxidases"/>
    <property type="match status" value="1"/>
</dbReference>
<dbReference type="PROSITE" id="PS00435">
    <property type="entry name" value="PEROXIDASE_1"/>
    <property type="match status" value="1"/>
</dbReference>
<dbReference type="PROSITE" id="PS00436">
    <property type="entry name" value="PEROXIDASE_2"/>
    <property type="match status" value="1"/>
</dbReference>
<dbReference type="PROSITE" id="PS50873">
    <property type="entry name" value="PEROXIDASE_4"/>
    <property type="match status" value="1"/>
</dbReference>
<proteinExistence type="evidence at protein level"/>
<sequence length="350" mass="38030">MDHKMSMYLFVSYLAIFTLFFKGFVSSFPSGYNNGYNNGHGHGLTSNLNYRFYDRSCPRLQTIVKSGVWRAFKDDSRIAASLLRLHFHDCFVNGCDGSILLNDSEDFKGEKNAQPNRNSVRGFEVIEDIKSDIESSCPLTVSCADIVALAAREAVVLTGGPFWPVPLGRRDSLTASEQAANTNLPSPFEALENITAKFVTLGLDLKDVVVLSGAHTIGFAQCFVIKHRLFNFKGSGQPDPNLAASSALLSKLKDTCPNVDSSDSKLAALDAASSVKFDNAYYVNLMNNIGLLDSDQTLMTDPTAAALVKSYSENPYLFSRDFAVSMVKMGNIGVMTGSDGVIRGKCGFPG</sequence>
<keyword id="KW-0106">Calcium</keyword>
<keyword id="KW-1015">Disulfide bond</keyword>
<keyword id="KW-0325">Glycoprotein</keyword>
<keyword id="KW-0349">Heme</keyword>
<keyword id="KW-0376">Hydrogen peroxide</keyword>
<keyword id="KW-0408">Iron</keyword>
<keyword id="KW-0479">Metal-binding</keyword>
<keyword id="KW-0560">Oxidoreductase</keyword>
<keyword id="KW-0575">Peroxidase</keyword>
<keyword id="KW-1185">Reference proteome</keyword>
<keyword id="KW-0964">Secreted</keyword>
<keyword id="KW-0732">Signal</keyword>
<feature type="signal peptide" evidence="1">
    <location>
        <begin position="1"/>
        <end position="27"/>
    </location>
</feature>
<feature type="chain" id="PRO_0000023676" description="Peroxidase 10">
    <location>
        <begin position="28"/>
        <end position="350"/>
    </location>
</feature>
<feature type="active site" description="Proton acceptor" evidence="2 3">
    <location>
        <position position="88"/>
    </location>
</feature>
<feature type="binding site" evidence="2">
    <location>
        <position position="89"/>
    </location>
    <ligand>
        <name>Ca(2+)</name>
        <dbReference type="ChEBI" id="CHEBI:29108"/>
        <label>1</label>
    </ligand>
</feature>
<feature type="binding site" evidence="2">
    <location>
        <position position="92"/>
    </location>
    <ligand>
        <name>Ca(2+)</name>
        <dbReference type="ChEBI" id="CHEBI:29108"/>
        <label>1</label>
    </ligand>
</feature>
<feature type="binding site" evidence="2">
    <location>
        <position position="94"/>
    </location>
    <ligand>
        <name>Ca(2+)</name>
        <dbReference type="ChEBI" id="CHEBI:29108"/>
        <label>1</label>
    </ligand>
</feature>
<feature type="binding site" evidence="2">
    <location>
        <position position="96"/>
    </location>
    <ligand>
        <name>Ca(2+)</name>
        <dbReference type="ChEBI" id="CHEBI:29108"/>
        <label>1</label>
    </ligand>
</feature>
<feature type="binding site" evidence="2">
    <location>
        <position position="98"/>
    </location>
    <ligand>
        <name>Ca(2+)</name>
        <dbReference type="ChEBI" id="CHEBI:29108"/>
        <label>1</label>
    </ligand>
</feature>
<feature type="binding site" evidence="2">
    <location>
        <position position="185"/>
    </location>
    <ligand>
        <name>substrate</name>
    </ligand>
</feature>
<feature type="binding site" description="axial binding residue" evidence="2">
    <location>
        <position position="215"/>
    </location>
    <ligand>
        <name>heme b</name>
        <dbReference type="ChEBI" id="CHEBI:60344"/>
    </ligand>
    <ligandPart>
        <name>Fe</name>
        <dbReference type="ChEBI" id="CHEBI:18248"/>
    </ligandPart>
</feature>
<feature type="binding site" evidence="2">
    <location>
        <position position="216"/>
    </location>
    <ligand>
        <name>Ca(2+)</name>
        <dbReference type="ChEBI" id="CHEBI:29108"/>
        <label>2</label>
    </ligand>
</feature>
<feature type="binding site" evidence="2">
    <location>
        <position position="270"/>
    </location>
    <ligand>
        <name>Ca(2+)</name>
        <dbReference type="ChEBI" id="CHEBI:29108"/>
        <label>2</label>
    </ligand>
</feature>
<feature type="binding site" evidence="2">
    <location>
        <position position="273"/>
    </location>
    <ligand>
        <name>Ca(2+)</name>
        <dbReference type="ChEBI" id="CHEBI:29108"/>
        <label>2</label>
    </ligand>
</feature>
<feature type="binding site" evidence="2">
    <location>
        <position position="278"/>
    </location>
    <ligand>
        <name>Ca(2+)</name>
        <dbReference type="ChEBI" id="CHEBI:29108"/>
        <label>2</label>
    </ligand>
</feature>
<feature type="site" description="Transition state stabilizer" evidence="2">
    <location>
        <position position="84"/>
    </location>
</feature>
<feature type="glycosylation site" description="N-linked (GlcNAc...) asparagine" evidence="1">
    <location>
        <position position="102"/>
    </location>
</feature>
<feature type="glycosylation site" description="N-linked (GlcNAc...) asparagine" evidence="1">
    <location>
        <position position="193"/>
    </location>
</feature>
<feature type="disulfide bond" evidence="2">
    <location>
        <begin position="57"/>
        <end position="137"/>
    </location>
</feature>
<feature type="disulfide bond" evidence="2">
    <location>
        <begin position="90"/>
        <end position="95"/>
    </location>
</feature>
<feature type="disulfide bond" evidence="2">
    <location>
        <begin position="143"/>
        <end position="346"/>
    </location>
</feature>
<feature type="disulfide bond" evidence="2">
    <location>
        <begin position="222"/>
        <end position="256"/>
    </location>
</feature>
<feature type="sequence conflict" description="In Ref. 1; CAA67341." evidence="4" ref="1">
    <original>V</original>
    <variation>A</variation>
    <location>
        <position position="199"/>
    </location>
</feature>
<feature type="sequence conflict" description="In Ref. 1; CAA67341." evidence="4" ref="1">
    <original>M</original>
    <variation>Q</variation>
    <location>
        <position position="335"/>
    </location>
</feature>